<comment type="function">
    <text evidence="1">Converts 1-acyl-sn-glycerol-3-phosphate (lysophosphatidic acid or LPA) into 1,2-diacyl-sn-glycerol-3-phosphate (phosphatidic acid or PA) by incorporating an acyl moiety at the sn-2 position of the glycerol backbone.</text>
</comment>
<comment type="catalytic activity">
    <reaction evidence="1">
        <text>a 1-acyl-sn-glycero-3-phosphate + an acyl-CoA = a 1,2-diacyl-sn-glycero-3-phosphate + CoA</text>
        <dbReference type="Rhea" id="RHEA:19709"/>
        <dbReference type="ChEBI" id="CHEBI:57287"/>
        <dbReference type="ChEBI" id="CHEBI:57970"/>
        <dbReference type="ChEBI" id="CHEBI:58342"/>
        <dbReference type="ChEBI" id="CHEBI:58608"/>
        <dbReference type="EC" id="2.3.1.51"/>
    </reaction>
    <physiologicalReaction direction="left-to-right" evidence="1">
        <dbReference type="Rhea" id="RHEA:19710"/>
    </physiologicalReaction>
</comment>
<comment type="catalytic activity">
    <reaction evidence="1">
        <text>1-(9Z-octadecenoyl)-sn-glycero-3-phosphate + (9Z)-octadecenoyl-CoA = 1,2-di-(9Z-octadecenoyl)-sn-glycero-3-phosphate + CoA</text>
        <dbReference type="Rhea" id="RHEA:37131"/>
        <dbReference type="ChEBI" id="CHEBI:57287"/>
        <dbReference type="ChEBI" id="CHEBI:57387"/>
        <dbReference type="ChEBI" id="CHEBI:74544"/>
        <dbReference type="ChEBI" id="CHEBI:74546"/>
    </reaction>
    <physiologicalReaction direction="left-to-right" evidence="1">
        <dbReference type="Rhea" id="RHEA:37132"/>
    </physiologicalReaction>
</comment>
<comment type="catalytic activity">
    <reaction evidence="1">
        <text>1-(9Z-octadecenoyl)-sn-glycero-3-phosphate + hexadecanoyl-CoA = 1-(9Z)-octadecenoyl-2-hexadecanoyl-sn-glycero-3-phosphate + CoA</text>
        <dbReference type="Rhea" id="RHEA:37143"/>
        <dbReference type="ChEBI" id="CHEBI:57287"/>
        <dbReference type="ChEBI" id="CHEBI:57379"/>
        <dbReference type="ChEBI" id="CHEBI:74544"/>
        <dbReference type="ChEBI" id="CHEBI:74551"/>
    </reaction>
    <physiologicalReaction direction="left-to-right" evidence="1">
        <dbReference type="Rhea" id="RHEA:37144"/>
    </physiologicalReaction>
</comment>
<comment type="catalytic activity">
    <reaction evidence="1">
        <text>heptadecanoyl-CoA + 1-(9Z-octadecenoyl)-sn-glycero-3-phosphate = 1-(9Z)-octadecenoyl-2-heptadecanoyl-sn-glycero-3-phosphate + CoA</text>
        <dbReference type="Rhea" id="RHEA:37155"/>
        <dbReference type="ChEBI" id="CHEBI:57287"/>
        <dbReference type="ChEBI" id="CHEBI:74307"/>
        <dbReference type="ChEBI" id="CHEBI:74544"/>
        <dbReference type="ChEBI" id="CHEBI:74558"/>
    </reaction>
    <physiologicalReaction direction="left-to-right" evidence="1">
        <dbReference type="Rhea" id="RHEA:37156"/>
    </physiologicalReaction>
</comment>
<comment type="catalytic activity">
    <reaction evidence="1">
        <text>1-(9Z-octadecenoyl)-sn-glycero-3-phosphate + octadecanoyl-CoA = 1-(9Z-octadecenoyl)-2-octadecanoyl-sn-glycero-3-phosphate + CoA</text>
        <dbReference type="Rhea" id="RHEA:37147"/>
        <dbReference type="ChEBI" id="CHEBI:57287"/>
        <dbReference type="ChEBI" id="CHEBI:57394"/>
        <dbReference type="ChEBI" id="CHEBI:74544"/>
        <dbReference type="ChEBI" id="CHEBI:74552"/>
    </reaction>
    <physiologicalReaction direction="left-to-right" evidence="1">
        <dbReference type="Rhea" id="RHEA:37148"/>
    </physiologicalReaction>
</comment>
<comment type="catalytic activity">
    <reaction evidence="1">
        <text>1-(9Z-octadecenoyl)-sn-glycero-3-phosphate + (9Z,12Z)-octadecadienoyl-CoA = 1-(9Z)-octadecenoyl-2-(9Z,12Z)-octadecadienoyl-sn-glycero-3-phosphate + CoA</text>
        <dbReference type="Rhea" id="RHEA:37159"/>
        <dbReference type="ChEBI" id="CHEBI:57287"/>
        <dbReference type="ChEBI" id="CHEBI:57383"/>
        <dbReference type="ChEBI" id="CHEBI:74544"/>
        <dbReference type="ChEBI" id="CHEBI:74563"/>
    </reaction>
    <physiologicalReaction direction="left-to-right" evidence="1">
        <dbReference type="Rhea" id="RHEA:37160"/>
    </physiologicalReaction>
</comment>
<comment type="catalytic activity">
    <reaction evidence="1">
        <text>1-(9Z-octadecenoyl)-sn-glycero-3-phosphate + tetradecanoyl-CoA = 1-(9Z)-octadecenoyl-2-tetradecanoyl-sn-glycero-3-phosphate + CoA</text>
        <dbReference type="Rhea" id="RHEA:37171"/>
        <dbReference type="ChEBI" id="CHEBI:57287"/>
        <dbReference type="ChEBI" id="CHEBI:57385"/>
        <dbReference type="ChEBI" id="CHEBI:74544"/>
        <dbReference type="ChEBI" id="CHEBI:74579"/>
    </reaction>
    <physiologicalReaction direction="left-to-right" evidence="1">
        <dbReference type="Rhea" id="RHEA:37172"/>
    </physiologicalReaction>
</comment>
<comment type="catalytic activity">
    <reaction evidence="1">
        <text>pentadecanoyl-CoA + 1-(9Z-octadecenoyl)-sn-glycero-3-phosphate = 1-(9Z)-octadecenoyl-2-pentadecanoyl-sn-glycero-3-phosphate + CoA</text>
        <dbReference type="Rhea" id="RHEA:37175"/>
        <dbReference type="ChEBI" id="CHEBI:57287"/>
        <dbReference type="ChEBI" id="CHEBI:74309"/>
        <dbReference type="ChEBI" id="CHEBI:74544"/>
        <dbReference type="ChEBI" id="CHEBI:74578"/>
    </reaction>
    <physiologicalReaction direction="left-to-right" evidence="1">
        <dbReference type="Rhea" id="RHEA:37176"/>
    </physiologicalReaction>
</comment>
<comment type="catalytic activity">
    <reaction evidence="1">
        <text>1-hexadecanoyl-sn-glycero-3-phosphate + (9Z)-octadecenoyl-CoA = 1-hexadecanoyl-2-(9Z-octadecenoyl)-sn-glycero-3-phosphate + CoA</text>
        <dbReference type="Rhea" id="RHEA:33187"/>
        <dbReference type="ChEBI" id="CHEBI:57287"/>
        <dbReference type="ChEBI" id="CHEBI:57387"/>
        <dbReference type="ChEBI" id="CHEBI:57518"/>
        <dbReference type="ChEBI" id="CHEBI:64839"/>
    </reaction>
    <physiologicalReaction direction="left-to-right" evidence="1">
        <dbReference type="Rhea" id="RHEA:33188"/>
    </physiologicalReaction>
</comment>
<comment type="catalytic activity">
    <reaction evidence="1">
        <text>1-(9Z,12Z,15Z)-octadecatrienoyl-sn-glycero-3-phosphate + (9Z)-octadecenoyl-CoA = 1-(9Z,12Z,15Z)-octadecatrienoyl-2-(9Z)-octadecenoyl-sn-glycero-3-phosphate + CoA</text>
        <dbReference type="Rhea" id="RHEA:37139"/>
        <dbReference type="ChEBI" id="CHEBI:57287"/>
        <dbReference type="ChEBI" id="CHEBI:57387"/>
        <dbReference type="ChEBI" id="CHEBI:74549"/>
        <dbReference type="ChEBI" id="CHEBI:74550"/>
    </reaction>
    <physiologicalReaction direction="left-to-right" evidence="1">
        <dbReference type="Rhea" id="RHEA:37140"/>
    </physiologicalReaction>
</comment>
<comment type="catalytic activity">
    <reaction evidence="1">
        <text>1-(6Z,9Z,12Z-octadecatrienoyl)-sn-glycero-3-phosphate + (9Z)-octadecenoyl-CoA = (6Z,9Z,12Z)-octadecatrienoyl-2-(9Z)-octadecenoyl-sn-glycero-3-phosphate + CoA</text>
        <dbReference type="Rhea" id="RHEA:37179"/>
        <dbReference type="ChEBI" id="CHEBI:57287"/>
        <dbReference type="ChEBI" id="CHEBI:57387"/>
        <dbReference type="ChEBI" id="CHEBI:74581"/>
        <dbReference type="ChEBI" id="CHEBI:74582"/>
    </reaction>
    <physiologicalReaction direction="left-to-right" evidence="1">
        <dbReference type="Rhea" id="RHEA:37180"/>
    </physiologicalReaction>
</comment>
<comment type="catalytic activity">
    <reaction evidence="1">
        <text>1-eicosanoyl-sn-glycero-3-phosphate + (9Z)-octadecenoyl-CoA = 1-eicosanoyl-2-(9Z)-octadecenoyl-sn-glycero-3-phosphate + CoA</text>
        <dbReference type="Rhea" id="RHEA:37183"/>
        <dbReference type="ChEBI" id="CHEBI:57287"/>
        <dbReference type="ChEBI" id="CHEBI:57387"/>
        <dbReference type="ChEBI" id="CHEBI:74583"/>
        <dbReference type="ChEBI" id="CHEBI:74584"/>
    </reaction>
    <physiologicalReaction direction="left-to-right" evidence="1">
        <dbReference type="Rhea" id="RHEA:37184"/>
    </physiologicalReaction>
</comment>
<comment type="catalytic activity">
    <reaction evidence="1">
        <text>1-tetradecanoyl-sn-glycerol 3-phosphate + (9Z)-octadecenoyl-CoA = 1-tetradecanoyl-2-(9Z)-octadecenoyl-sn-glycero-3-phosphate + CoA</text>
        <dbReference type="Rhea" id="RHEA:37187"/>
        <dbReference type="ChEBI" id="CHEBI:57287"/>
        <dbReference type="ChEBI" id="CHEBI:57387"/>
        <dbReference type="ChEBI" id="CHEBI:72683"/>
        <dbReference type="ChEBI" id="CHEBI:74586"/>
    </reaction>
    <physiologicalReaction direction="left-to-right" evidence="1">
        <dbReference type="Rhea" id="RHEA:37188"/>
    </physiologicalReaction>
</comment>
<comment type="catalytic activity">
    <reaction evidence="1">
        <text>1-(9Z-octadecenoyl)-sn-glycero-3-phosphate + (5Z,8Z,11Z,14Z)-eicosatetraenoyl-CoA = 1-(9Z)-octadecenoyl-2-(5Z,8Z,11Z,14Z)-eicosatetraenoyl-sn-glycero-3-phosphate + CoA</text>
        <dbReference type="Rhea" id="RHEA:37443"/>
        <dbReference type="ChEBI" id="CHEBI:57287"/>
        <dbReference type="ChEBI" id="CHEBI:57368"/>
        <dbReference type="ChEBI" id="CHEBI:74544"/>
        <dbReference type="ChEBI" id="CHEBI:74928"/>
    </reaction>
    <physiologicalReaction direction="left-to-right" evidence="1">
        <dbReference type="Rhea" id="RHEA:37444"/>
    </physiologicalReaction>
</comment>
<comment type="catalytic activity">
    <reaction evidence="1">
        <text>1-(9Z-octadecenoyl)-sn-glycero-3-phosphate + dodecanoyl-CoA = 1-(9Z)-octadecenoyl-2-dodecanoyl-sn-glycero-3-phosphate + CoA</text>
        <dbReference type="Rhea" id="RHEA:37591"/>
        <dbReference type="ChEBI" id="CHEBI:57287"/>
        <dbReference type="ChEBI" id="CHEBI:57375"/>
        <dbReference type="ChEBI" id="CHEBI:74544"/>
        <dbReference type="ChEBI" id="CHEBI:75076"/>
    </reaction>
    <physiologicalReaction direction="left-to-right" evidence="1">
        <dbReference type="Rhea" id="RHEA:37592"/>
    </physiologicalReaction>
</comment>
<comment type="catalytic activity">
    <reaction evidence="1">
        <text>(6Z)-octadecenoyl-CoA + 1-(9Z-octadecenoyl)-sn-glycero-3-phosphate = 1-(9Z)-octadecenoyl-2-(6Z)-octadecenoyl-sn-glycero-3-phosphate + CoA</text>
        <dbReference type="Rhea" id="RHEA:37607"/>
        <dbReference type="ChEBI" id="CHEBI:57287"/>
        <dbReference type="ChEBI" id="CHEBI:74544"/>
        <dbReference type="ChEBI" id="CHEBI:75123"/>
        <dbReference type="ChEBI" id="CHEBI:75124"/>
    </reaction>
    <physiologicalReaction direction="left-to-right" evidence="1">
        <dbReference type="Rhea" id="RHEA:37608"/>
    </physiologicalReaction>
</comment>
<comment type="catalytic activity">
    <reaction evidence="1">
        <text>(11Z)-octadecenoyl-CoA + 1-(9Z-octadecenoyl)-sn-glycero-3-phosphate = 1-(9Z)-octadecenoyl-2-(11Z)-octadecenoyl-sn-glycero-3-phosphate + CoA</text>
        <dbReference type="Rhea" id="RHEA:37603"/>
        <dbReference type="ChEBI" id="CHEBI:57287"/>
        <dbReference type="ChEBI" id="CHEBI:74544"/>
        <dbReference type="ChEBI" id="CHEBI:75121"/>
        <dbReference type="ChEBI" id="CHEBI:75122"/>
    </reaction>
    <physiologicalReaction direction="left-to-right" evidence="1">
        <dbReference type="Rhea" id="RHEA:37604"/>
    </physiologicalReaction>
</comment>
<comment type="catalytic activity">
    <reaction evidence="1">
        <text>(9Z)-hexadecenoyl-CoA + 1-(9Z-octadecenoyl)-sn-glycero-3-phosphate = 1-(9Z-octadecenoyl)-2-(9Z-hexadecenoyl)-sn-glycero-3-phosphate + CoA</text>
        <dbReference type="Rhea" id="RHEA:40195"/>
        <dbReference type="ChEBI" id="CHEBI:57287"/>
        <dbReference type="ChEBI" id="CHEBI:61540"/>
        <dbReference type="ChEBI" id="CHEBI:74544"/>
        <dbReference type="ChEBI" id="CHEBI:74697"/>
    </reaction>
    <physiologicalReaction direction="left-to-right" evidence="1">
        <dbReference type="Rhea" id="RHEA:40196"/>
    </physiologicalReaction>
</comment>
<comment type="pathway">
    <text>Phospholipid metabolism; CDP-diacylglycerol biosynthesis; CDP-diacylglycerol from sn-glycerol 3-phosphate: step 2/3.</text>
</comment>
<comment type="subcellular location">
    <subcellularLocation>
        <location evidence="1">Endoplasmic reticulum membrane</location>
        <topology evidence="3">Multi-pass membrane protein</topology>
    </subcellularLocation>
</comment>
<comment type="domain">
    <text evidence="2">The HXXXXD motif is essential for acyltransferase activity and may constitute the binding site for the phosphate moiety of the glycerol-3-phosphate.</text>
</comment>
<comment type="similarity">
    <text evidence="4">Belongs to the 1-acyl-sn-glycerol-3-phosphate acyltransferase family.</text>
</comment>
<sequence>MELWPGAGTLLLLLFLLLLLLLPTLWFCSPSAKYFFKMAFYNGWILFLAVLAIPVCAVRGRNVENMKILRLMLLHIKYLYGIRVEVRGAHHFPPSQPYVVVSNHQSSLDLLGMMEVLPGRCVPIAKRELLWAGSAGLACWLAGVIFIDRKRTGDAISVMSEVAQTLLTQDVRVWVFPEGTRNHNGSMLPFKRGAFHLAVQAQVPIVPIVMSSYQDFYCKKERRFTSGRCQVRVLPPVPTEGLKPDDVPALADRVRHSMLTVFREISTDGRGGGDYLKKPGGVGEAGL</sequence>
<proteinExistence type="evidence at transcript level"/>
<reference key="1">
    <citation type="journal article" date="2002" name="J. Dairy Sci.">
        <title>Cloning and localization of the bovine and ovine lysophosphatidic acid acyltransferase (LPAAT) genes that codes for an enzyme involved in triglyceride biosynthesis.</title>
        <authorList>
            <person name="Mistry D.H."/>
            <person name="Medrano J.F."/>
        </authorList>
    </citation>
    <scope>NUCLEOTIDE SEQUENCE [GENOMIC DNA / MRNA]</scope>
    <source>
        <strain>Holstein</strain>
        <tissue>Mammary gland</tissue>
    </source>
</reference>
<reference key="2">
    <citation type="submission" date="2006-05" db="EMBL/GenBank/DDBJ databases">
        <authorList>
            <consortium name="NIH - Mammalian Gene Collection (MGC) project"/>
        </authorList>
    </citation>
    <scope>NUCLEOTIDE SEQUENCE [LARGE SCALE MRNA]</scope>
    <source>
        <strain>Crossbred X Angus</strain>
        <tissue>Liver</tissue>
    </source>
</reference>
<organism>
    <name type="scientific">Bos taurus</name>
    <name type="common">Bovine</name>
    <dbReference type="NCBI Taxonomy" id="9913"/>
    <lineage>
        <taxon>Eukaryota</taxon>
        <taxon>Metazoa</taxon>
        <taxon>Chordata</taxon>
        <taxon>Craniata</taxon>
        <taxon>Vertebrata</taxon>
        <taxon>Euteleostomi</taxon>
        <taxon>Mammalia</taxon>
        <taxon>Eutheria</taxon>
        <taxon>Laurasiatheria</taxon>
        <taxon>Artiodactyla</taxon>
        <taxon>Ruminantia</taxon>
        <taxon>Pecora</taxon>
        <taxon>Bovidae</taxon>
        <taxon>Bovinae</taxon>
        <taxon>Bos</taxon>
    </lineage>
</organism>
<evidence type="ECO:0000250" key="1">
    <source>
        <dbReference type="UniProtKB" id="Q99943"/>
    </source>
</evidence>
<evidence type="ECO:0000250" key="2">
    <source>
        <dbReference type="UniProtKB" id="Q9D517"/>
    </source>
</evidence>
<evidence type="ECO:0000255" key="3"/>
<evidence type="ECO:0000305" key="4"/>
<protein>
    <recommendedName>
        <fullName>1-acyl-sn-glycerol-3-phosphate acyltransferase alpha</fullName>
        <ecNumber evidence="1">2.3.1.51</ecNumber>
    </recommendedName>
    <alternativeName>
        <fullName>1-acylglycerol-3-phosphate O-acyltransferase 1</fullName>
        <shortName>1-AGP acyltransferase 1</shortName>
        <shortName>1-AGPAT 1</shortName>
    </alternativeName>
    <alternativeName>
        <fullName evidence="1">Lysophosphatidic acid acyltransferase alpha</fullName>
        <shortName>LPAAT-alpha</shortName>
    </alternativeName>
</protein>
<dbReference type="EC" id="2.3.1.51" evidence="1"/>
<dbReference type="EMBL" id="AF281677">
    <property type="protein sequence ID" value="AAK69168.1"/>
    <property type="molecule type" value="mRNA"/>
</dbReference>
<dbReference type="EMBL" id="AF285100">
    <property type="protein sequence ID" value="AAK58832.1"/>
    <property type="molecule type" value="Genomic_DNA"/>
</dbReference>
<dbReference type="EMBL" id="BC115999">
    <property type="protein sequence ID" value="AAI16000.1"/>
    <property type="molecule type" value="mRNA"/>
</dbReference>
<dbReference type="RefSeq" id="NP_803484.1">
    <property type="nucleotide sequence ID" value="NM_177518.1"/>
</dbReference>
<dbReference type="RefSeq" id="XP_015315353.1">
    <property type="nucleotide sequence ID" value="XM_015459867.3"/>
</dbReference>
<dbReference type="RefSeq" id="XP_015315354.1">
    <property type="nucleotide sequence ID" value="XM_015459868.1"/>
</dbReference>
<dbReference type="RefSeq" id="XP_024839150.1">
    <property type="nucleotide sequence ID" value="XM_024983382.2"/>
</dbReference>
<dbReference type="RefSeq" id="XP_024839151.1">
    <property type="nucleotide sequence ID" value="XM_024983383.1"/>
</dbReference>
<dbReference type="RefSeq" id="XP_059736193.1">
    <property type="nucleotide sequence ID" value="XM_059880210.1"/>
</dbReference>
<dbReference type="SMR" id="Q95JH2"/>
<dbReference type="FunCoup" id="Q95JH2">
    <property type="interactions" value="1357"/>
</dbReference>
<dbReference type="STRING" id="9913.ENSBTAP00000005821"/>
<dbReference type="PaxDb" id="9913-ENSBTAP00000005821"/>
<dbReference type="PeptideAtlas" id="Q95JH2"/>
<dbReference type="Ensembl" id="ENSBTAT00000005821.3">
    <property type="protein sequence ID" value="ENSBTAP00000005821.2"/>
    <property type="gene ID" value="ENSBTAG00000004442.4"/>
</dbReference>
<dbReference type="GeneID" id="282137"/>
<dbReference type="KEGG" id="bta:282137"/>
<dbReference type="CTD" id="10554"/>
<dbReference type="VEuPathDB" id="HostDB:ENSBTAG00000004442"/>
<dbReference type="VGNC" id="VGNC:25734">
    <property type="gene designation" value="AGPAT1"/>
</dbReference>
<dbReference type="eggNOG" id="KOG2848">
    <property type="taxonomic scope" value="Eukaryota"/>
</dbReference>
<dbReference type="GeneTree" id="ENSGT00390000008726"/>
<dbReference type="HOGENOM" id="CLU_027938_10_1_1"/>
<dbReference type="InParanoid" id="Q95JH2"/>
<dbReference type="OMA" id="KKSLVWI"/>
<dbReference type="OrthoDB" id="202234at2759"/>
<dbReference type="TreeFam" id="TF314867"/>
<dbReference type="Reactome" id="R-BTA-1483166">
    <property type="pathway name" value="Synthesis of PA"/>
</dbReference>
<dbReference type="UniPathway" id="UPA00557">
    <property type="reaction ID" value="UER00613"/>
</dbReference>
<dbReference type="Proteomes" id="UP000009136">
    <property type="component" value="Chromosome 23"/>
</dbReference>
<dbReference type="Bgee" id="ENSBTAG00000004442">
    <property type="expression patterns" value="Expressed in Ammon's horn and 106 other cell types or tissues"/>
</dbReference>
<dbReference type="GO" id="GO:0005783">
    <property type="term" value="C:endoplasmic reticulum"/>
    <property type="evidence" value="ECO:0000250"/>
    <property type="project" value="UniProtKB"/>
</dbReference>
<dbReference type="GO" id="GO:0005789">
    <property type="term" value="C:endoplasmic reticulum membrane"/>
    <property type="evidence" value="ECO:0007669"/>
    <property type="project" value="UniProtKB-SubCell"/>
</dbReference>
<dbReference type="GO" id="GO:0003841">
    <property type="term" value="F:1-acylglycerol-3-phosphate O-acyltransferase activity"/>
    <property type="evidence" value="ECO:0000250"/>
    <property type="project" value="UniProtKB"/>
</dbReference>
<dbReference type="GO" id="GO:0016024">
    <property type="term" value="P:CDP-diacylglycerol biosynthetic process"/>
    <property type="evidence" value="ECO:0007669"/>
    <property type="project" value="UniProtKB-UniPathway"/>
</dbReference>
<dbReference type="GO" id="GO:0006654">
    <property type="term" value="P:phosphatidic acid biosynthetic process"/>
    <property type="evidence" value="ECO:0000318"/>
    <property type="project" value="GO_Central"/>
</dbReference>
<dbReference type="CDD" id="cd07989">
    <property type="entry name" value="LPLAT_AGPAT-like"/>
    <property type="match status" value="1"/>
</dbReference>
<dbReference type="InterPro" id="IPR004552">
    <property type="entry name" value="AGP_acyltrans"/>
</dbReference>
<dbReference type="InterPro" id="IPR002123">
    <property type="entry name" value="Plipid/glycerol_acylTrfase"/>
</dbReference>
<dbReference type="NCBIfam" id="TIGR00530">
    <property type="entry name" value="AGP_acyltrn"/>
    <property type="match status" value="1"/>
</dbReference>
<dbReference type="PANTHER" id="PTHR10434">
    <property type="entry name" value="1-ACYL-SN-GLYCEROL-3-PHOSPHATE ACYLTRANSFERASE"/>
    <property type="match status" value="1"/>
</dbReference>
<dbReference type="PANTHER" id="PTHR10434:SF65">
    <property type="entry name" value="1-ACYL-SN-GLYCEROL-3-PHOSPHATE ACYLTRANSFERASE ALPHA"/>
    <property type="match status" value="1"/>
</dbReference>
<dbReference type="Pfam" id="PF01553">
    <property type="entry name" value="Acyltransferase"/>
    <property type="match status" value="1"/>
</dbReference>
<dbReference type="SMART" id="SM00563">
    <property type="entry name" value="PlsC"/>
    <property type="match status" value="1"/>
</dbReference>
<dbReference type="SUPFAM" id="SSF69593">
    <property type="entry name" value="Glycerol-3-phosphate (1)-acyltransferase"/>
    <property type="match status" value="1"/>
</dbReference>
<gene>
    <name type="primary">AGPAT1</name>
</gene>
<feature type="signal peptide" evidence="3">
    <location>
        <begin position="1"/>
        <end position="26"/>
    </location>
</feature>
<feature type="chain" id="PRO_0000254018" description="1-acyl-sn-glycerol-3-phosphate acyltransferase alpha">
    <location>
        <begin position="27"/>
        <end position="287"/>
    </location>
</feature>
<feature type="topological domain" description="Lumenal" evidence="1">
    <location>
        <begin position="27"/>
        <end position="37"/>
    </location>
</feature>
<feature type="transmembrane region" description="Helical" evidence="3">
    <location>
        <begin position="38"/>
        <end position="58"/>
    </location>
</feature>
<feature type="topological domain" description="Cytoplasmic" evidence="1">
    <location>
        <begin position="59"/>
        <end position="127"/>
    </location>
</feature>
<feature type="transmembrane region" description="Helical" evidence="3">
    <location>
        <begin position="128"/>
        <end position="148"/>
    </location>
</feature>
<feature type="topological domain" description="Lumenal" evidence="1">
    <location>
        <begin position="149"/>
        <end position="287"/>
    </location>
</feature>
<feature type="short sequence motif" description="HXXXXD motif" evidence="2">
    <location>
        <begin position="104"/>
        <end position="109"/>
    </location>
</feature>
<feature type="short sequence motif" description="EGTR motif" evidence="1">
    <location>
        <begin position="178"/>
        <end position="181"/>
    </location>
</feature>
<feature type="sequence conflict" description="In Ref. 1; AAK58832." evidence="4" ref="1">
    <original>Y</original>
    <variation>C</variation>
    <location>
        <position position="41"/>
    </location>
</feature>
<feature type="sequence conflict" description="In Ref. 1; AAK58832." evidence="4" ref="1">
    <original>A</original>
    <variation>V</variation>
    <location>
        <position position="52"/>
    </location>
</feature>
<feature type="sequence conflict" description="In Ref. 1; AAK58832." evidence="4" ref="1">
    <original>K</original>
    <variation>R</variation>
    <location>
        <position position="243"/>
    </location>
</feature>
<feature type="sequence conflict" description="In Ref. 1; AAK58832." evidence="4" ref="1">
    <original>G</original>
    <variation>S</variation>
    <location>
        <position position="271"/>
    </location>
</feature>
<name>PLCA_BOVIN</name>
<keyword id="KW-0012">Acyltransferase</keyword>
<keyword id="KW-0256">Endoplasmic reticulum</keyword>
<keyword id="KW-0444">Lipid biosynthesis</keyword>
<keyword id="KW-0443">Lipid metabolism</keyword>
<keyword id="KW-0472">Membrane</keyword>
<keyword id="KW-0594">Phospholipid biosynthesis</keyword>
<keyword id="KW-1208">Phospholipid metabolism</keyword>
<keyword id="KW-1185">Reference proteome</keyword>
<keyword id="KW-0732">Signal</keyword>
<keyword id="KW-0808">Transferase</keyword>
<keyword id="KW-0812">Transmembrane</keyword>
<keyword id="KW-1133">Transmembrane helix</keyword>
<accession>Q95JH2</accession>
<accession>Q95MP8</accession>